<dbReference type="SMR" id="P0DL74"/>
<dbReference type="GO" id="GO:0005576">
    <property type="term" value="C:extracellular region"/>
    <property type="evidence" value="ECO:0007669"/>
    <property type="project" value="UniProtKB-SubCell"/>
</dbReference>
<dbReference type="GO" id="GO:0008200">
    <property type="term" value="F:ion channel inhibitor activity"/>
    <property type="evidence" value="ECO:0007669"/>
    <property type="project" value="InterPro"/>
</dbReference>
<dbReference type="GO" id="GO:0015459">
    <property type="term" value="F:potassium channel regulator activity"/>
    <property type="evidence" value="ECO:0007669"/>
    <property type="project" value="UniProtKB-KW"/>
</dbReference>
<dbReference type="GO" id="GO:0017080">
    <property type="term" value="F:sodium channel regulator activity"/>
    <property type="evidence" value="ECO:0007669"/>
    <property type="project" value="UniProtKB-KW"/>
</dbReference>
<dbReference type="GO" id="GO:0090729">
    <property type="term" value="F:toxin activity"/>
    <property type="evidence" value="ECO:0007669"/>
    <property type="project" value="UniProtKB-KW"/>
</dbReference>
<dbReference type="InterPro" id="IPR011696">
    <property type="entry name" value="Huwentoxin-1"/>
</dbReference>
<dbReference type="InterPro" id="IPR013140">
    <property type="entry name" value="Huwentoxin_CS1"/>
</dbReference>
<dbReference type="Pfam" id="PF07740">
    <property type="entry name" value="Toxin_12"/>
    <property type="match status" value="1"/>
</dbReference>
<dbReference type="SUPFAM" id="SSF57059">
    <property type="entry name" value="omega toxin-like"/>
    <property type="match status" value="1"/>
</dbReference>
<dbReference type="PROSITE" id="PS60021">
    <property type="entry name" value="HWTX_1"/>
    <property type="match status" value="1"/>
</dbReference>
<keyword id="KW-0903">Direct protein sequencing</keyword>
<keyword id="KW-1015">Disulfide bond</keyword>
<keyword id="KW-0872">Ion channel impairing toxin</keyword>
<keyword id="KW-0960">Knottin</keyword>
<keyword id="KW-0528">Neurotoxin</keyword>
<keyword id="KW-0632">Potassium channel impairing toxin</keyword>
<keyword id="KW-0964">Secreted</keyword>
<keyword id="KW-0800">Toxin</keyword>
<keyword id="KW-0738">Voltage-gated sodium channel impairing toxin</keyword>
<sequence>DCLGWFKGCDPDNDKCCEGYKCNRRDKWCKYKLW</sequence>
<proteinExistence type="evidence at protein level"/>
<name>VSTX3_PARSR</name>
<evidence type="ECO:0000250" key="1"/>
<evidence type="ECO:0000250" key="2">
    <source>
        <dbReference type="UniProtKB" id="P0C2P5"/>
    </source>
</evidence>
<evidence type="ECO:0000250" key="3">
    <source>
        <dbReference type="UniProtKB" id="P0DL72"/>
    </source>
</evidence>
<evidence type="ECO:0000269" key="4">
    <source>
    </source>
</evidence>
<evidence type="ECO:0000303" key="5">
    <source>
    </source>
</evidence>
<evidence type="ECO:0000305" key="6"/>
<evidence type="ECO:0000305" key="7">
    <source>
    </source>
</evidence>
<reference key="1">
    <citation type="journal article" date="2014" name="Toxicon">
        <title>Two tarantula venom peptides as potent and differential Na(V) channels blockers.</title>
        <authorList>
            <person name="Cherki R.S."/>
            <person name="Kolb E."/>
            <person name="Langut Y."/>
            <person name="Tsveyer L."/>
            <person name="Bajayo N."/>
            <person name="Meir A."/>
        </authorList>
    </citation>
    <scope>PROTEIN SEQUENCE</scope>
    <scope>SYNTHESIS</scope>
    <scope>SUBCELLULAR LOCATION</scope>
    <scope>MASS SPECTROMETRY</scope>
    <source>
        <tissue>Venom</tissue>
    </source>
</reference>
<comment type="function">
    <text evidence="2 4">Potent voltage-gated sodium channel blocker (IC(50)=190 nM and 210 nM on human and rat Nav1.3/SCN3A respectively, 430 nM on human Nav1.7/SCN9A, 770 nM and 290 nM on human and rat Nav1.8/SCN10A respectively) (PubMed:24211312). Binds the voltage-sensor domain of the potassium channel KvAP (from Aeropyrum pernix) and weakly inhibits this channel (By similarity).</text>
</comment>
<comment type="subcellular location">
    <subcellularLocation>
        <location evidence="4">Secreted</location>
    </subcellularLocation>
</comment>
<comment type="tissue specificity">
    <text evidence="7">Expressed by the venom gland.</text>
</comment>
<comment type="domain">
    <text evidence="1">The presence of a 'disulfide through disulfide knot' structurally defines this protein as a knottin.</text>
</comment>
<comment type="mass spectrometry">
    <text>Monoisotopic mass.</text>
</comment>
<comment type="miscellaneous">
    <text evidence="4">Shows only a very weak inhibition on human Nav1.5/SCN5A.</text>
</comment>
<comment type="miscellaneous">
    <text evidence="6">The primary structure of the mature peptide is identical to that of VSTX3 from Grammostola rosea (AC P0C2P5).</text>
</comment>
<comment type="similarity">
    <text evidence="6">Belongs to the neurotoxin 10 (Hwtx-1) family. 61 (VSTX3) subfamily.</text>
</comment>
<accession>P0DL74</accession>
<organism>
    <name type="scientific">Paraphysa scrofa</name>
    <name type="common">Chilean copper tarantula</name>
    <name type="synonym">Phrixotrichus auratus</name>
    <dbReference type="NCBI Taxonomy" id="269635"/>
    <lineage>
        <taxon>Eukaryota</taxon>
        <taxon>Metazoa</taxon>
        <taxon>Ecdysozoa</taxon>
        <taxon>Arthropoda</taxon>
        <taxon>Chelicerata</taxon>
        <taxon>Arachnida</taxon>
        <taxon>Araneae</taxon>
        <taxon>Mygalomorphae</taxon>
        <taxon>Theraphosidae</taxon>
        <taxon>Paraphysa</taxon>
    </lineage>
</organism>
<feature type="peptide" id="PRO_0000442000" description="Voltage sensor toxin 3" evidence="4">
    <location>
        <begin position="1"/>
        <end position="34"/>
    </location>
</feature>
<feature type="disulfide bond" evidence="3">
    <location>
        <begin position="2"/>
        <end position="17"/>
    </location>
</feature>
<feature type="disulfide bond" evidence="3">
    <location>
        <begin position="9"/>
        <end position="22"/>
    </location>
</feature>
<feature type="disulfide bond" evidence="3">
    <location>
        <begin position="16"/>
        <end position="29"/>
    </location>
</feature>
<protein>
    <recommendedName>
        <fullName evidence="5">Voltage sensor toxin 3</fullName>
        <shortName evidence="5">VSTX3</shortName>
    </recommendedName>
    <alternativeName>
        <fullName evidence="2">Beta/kappa-theraphotoxin-Gr4a</fullName>
        <shortName evidence="2">Beta/kappa-TRTX-Gr4a</shortName>
    </alternativeName>
</protein>